<protein>
    <recommendedName>
        <fullName evidence="1">Urease accessory protein UreE</fullName>
    </recommendedName>
</protein>
<sequence length="170" mass="19409">MIIERLVGNLRDLNPLDFNVDHVDLEWFETRKKIARFKTRQGKDIAIRLKDAPKLGLSQGDILFKEEKEIIAVNILDSEVIHIQAKSVAEVAKICYEIGNRHAALYYGESQFEFKTPFEKPTLALLEKLGVQNRVLSSKLDSKERLTVSMPHSEPNFKVSLASDFKVVVK</sequence>
<reference key="1">
    <citation type="journal article" date="1999" name="Nature">
        <title>Genomic sequence comparison of two unrelated isolates of the human gastric pathogen Helicobacter pylori.</title>
        <authorList>
            <person name="Alm R.A."/>
            <person name="Ling L.-S.L."/>
            <person name="Moir D.T."/>
            <person name="King B.L."/>
            <person name="Brown E.D."/>
            <person name="Doig P.C."/>
            <person name="Smith D.R."/>
            <person name="Noonan B."/>
            <person name="Guild B.C."/>
            <person name="deJonge B.L."/>
            <person name="Carmel G."/>
            <person name="Tummino P.J."/>
            <person name="Caruso A."/>
            <person name="Uria-Nickelsen M."/>
            <person name="Mills D.M."/>
            <person name="Ives C."/>
            <person name="Gibson R."/>
            <person name="Merberg D."/>
            <person name="Mills S.D."/>
            <person name="Jiang Q."/>
            <person name="Taylor D.E."/>
            <person name="Vovis G.F."/>
            <person name="Trust T.J."/>
        </authorList>
    </citation>
    <scope>NUCLEOTIDE SEQUENCE [LARGE SCALE GENOMIC DNA]</scope>
    <source>
        <strain>J99 / ATCC 700824</strain>
    </source>
</reference>
<evidence type="ECO:0000255" key="1">
    <source>
        <dbReference type="HAMAP-Rule" id="MF_00822"/>
    </source>
</evidence>
<comment type="function">
    <text evidence="1">Involved in urease metallocenter assembly. Binds nickel. Probably functions as a nickel donor during metallocenter assembly.</text>
</comment>
<comment type="subcellular location">
    <subcellularLocation>
        <location evidence="1">Cytoplasm</location>
    </subcellularLocation>
</comment>
<comment type="similarity">
    <text evidence="1">Belongs to the UreE family.</text>
</comment>
<dbReference type="EMBL" id="AE001439">
    <property type="protein sequence ID" value="AAD05636.1"/>
    <property type="molecule type" value="Genomic_DNA"/>
</dbReference>
<dbReference type="PIR" id="E71979">
    <property type="entry name" value="E71979"/>
</dbReference>
<dbReference type="RefSeq" id="WP_000583091.1">
    <property type="nucleotide sequence ID" value="NZ_CP011330.1"/>
</dbReference>
<dbReference type="SMR" id="Q9ZMZ5"/>
<dbReference type="KEGG" id="hpj:jhp_0065"/>
<dbReference type="PATRIC" id="fig|85963.30.peg.969"/>
<dbReference type="eggNOG" id="COG2371">
    <property type="taxonomic scope" value="Bacteria"/>
</dbReference>
<dbReference type="Proteomes" id="UP000000804">
    <property type="component" value="Chromosome"/>
</dbReference>
<dbReference type="GO" id="GO:0005737">
    <property type="term" value="C:cytoplasm"/>
    <property type="evidence" value="ECO:0007669"/>
    <property type="project" value="UniProtKB-SubCell"/>
</dbReference>
<dbReference type="GO" id="GO:0016151">
    <property type="term" value="F:nickel cation binding"/>
    <property type="evidence" value="ECO:0007669"/>
    <property type="project" value="UniProtKB-UniRule"/>
</dbReference>
<dbReference type="GO" id="GO:0051082">
    <property type="term" value="F:unfolded protein binding"/>
    <property type="evidence" value="ECO:0007669"/>
    <property type="project" value="UniProtKB-UniRule"/>
</dbReference>
<dbReference type="GO" id="GO:0006457">
    <property type="term" value="P:protein folding"/>
    <property type="evidence" value="ECO:0007669"/>
    <property type="project" value="InterPro"/>
</dbReference>
<dbReference type="GO" id="GO:0065003">
    <property type="term" value="P:protein-containing complex assembly"/>
    <property type="evidence" value="ECO:0007669"/>
    <property type="project" value="InterPro"/>
</dbReference>
<dbReference type="GO" id="GO:0019627">
    <property type="term" value="P:urea metabolic process"/>
    <property type="evidence" value="ECO:0007669"/>
    <property type="project" value="InterPro"/>
</dbReference>
<dbReference type="CDD" id="cd00571">
    <property type="entry name" value="UreE"/>
    <property type="match status" value="1"/>
</dbReference>
<dbReference type="Gene3D" id="2.60.260.20">
    <property type="entry name" value="Urease metallochaperone UreE, N-terminal domain"/>
    <property type="match status" value="1"/>
</dbReference>
<dbReference type="Gene3D" id="3.30.70.790">
    <property type="entry name" value="UreE, C-terminal domain"/>
    <property type="match status" value="1"/>
</dbReference>
<dbReference type="HAMAP" id="MF_00822">
    <property type="entry name" value="UreE"/>
    <property type="match status" value="1"/>
</dbReference>
<dbReference type="InterPro" id="IPR012406">
    <property type="entry name" value="UreE"/>
</dbReference>
<dbReference type="InterPro" id="IPR007864">
    <property type="entry name" value="UreE_C_dom"/>
</dbReference>
<dbReference type="InterPro" id="IPR004029">
    <property type="entry name" value="UreE_N"/>
</dbReference>
<dbReference type="InterPro" id="IPR036118">
    <property type="entry name" value="UreE_N_sf"/>
</dbReference>
<dbReference type="NCBIfam" id="NF009754">
    <property type="entry name" value="PRK13261.1-6"/>
    <property type="match status" value="1"/>
</dbReference>
<dbReference type="Pfam" id="PF05194">
    <property type="entry name" value="UreE_C"/>
    <property type="match status" value="1"/>
</dbReference>
<dbReference type="Pfam" id="PF02814">
    <property type="entry name" value="UreE_N"/>
    <property type="match status" value="1"/>
</dbReference>
<dbReference type="PIRSF" id="PIRSF036402">
    <property type="entry name" value="Ureas_acces_UreE"/>
    <property type="match status" value="1"/>
</dbReference>
<dbReference type="SMART" id="SM00988">
    <property type="entry name" value="UreE_N"/>
    <property type="match status" value="1"/>
</dbReference>
<dbReference type="SUPFAM" id="SSF69737">
    <property type="entry name" value="Urease metallochaperone UreE, C-terminal domain"/>
    <property type="match status" value="1"/>
</dbReference>
<dbReference type="SUPFAM" id="SSF69287">
    <property type="entry name" value="Urease metallochaperone UreE, N-terminal domain"/>
    <property type="match status" value="1"/>
</dbReference>
<organism>
    <name type="scientific">Helicobacter pylori (strain J99 / ATCC 700824)</name>
    <name type="common">Campylobacter pylori J99</name>
    <dbReference type="NCBI Taxonomy" id="85963"/>
    <lineage>
        <taxon>Bacteria</taxon>
        <taxon>Pseudomonadati</taxon>
        <taxon>Campylobacterota</taxon>
        <taxon>Epsilonproteobacteria</taxon>
        <taxon>Campylobacterales</taxon>
        <taxon>Helicobacteraceae</taxon>
        <taxon>Helicobacter</taxon>
    </lineage>
</organism>
<feature type="chain" id="PRO_0000067634" description="Urease accessory protein UreE">
    <location>
        <begin position="1"/>
        <end position="170"/>
    </location>
</feature>
<gene>
    <name evidence="1" type="primary">ureE</name>
    <name type="ordered locus">jhp_0065</name>
</gene>
<accession>Q9ZMZ5</accession>
<name>UREE_HELPJ</name>
<keyword id="KW-0143">Chaperone</keyword>
<keyword id="KW-0963">Cytoplasm</keyword>
<keyword id="KW-0533">Nickel</keyword>
<keyword id="KW-0996">Nickel insertion</keyword>
<proteinExistence type="inferred from homology"/>